<proteinExistence type="inferred from homology"/>
<evidence type="ECO:0000255" key="1">
    <source>
        <dbReference type="HAMAP-Rule" id="MF_01366"/>
    </source>
</evidence>
<evidence type="ECO:0000305" key="2"/>
<accession>Q5L5W3</accession>
<comment type="function">
    <text evidence="1">This protein is one of the early assembly proteins of the 50S ribosomal subunit, although it is not seen to bind rRNA by itself. It is important during the early stages of 50S assembly.</text>
</comment>
<comment type="subunit">
    <text evidence="1">Part of the 50S ribosomal subunit.</text>
</comment>
<comment type="similarity">
    <text evidence="1">Belongs to the universal ribosomal protein uL13 family.</text>
</comment>
<gene>
    <name evidence="1" type="primary">rplM</name>
    <name type="ordered locus">CAB518</name>
</gene>
<dbReference type="EMBL" id="CR848038">
    <property type="protein sequence ID" value="CAH63969.1"/>
    <property type="molecule type" value="Genomic_DNA"/>
</dbReference>
<dbReference type="RefSeq" id="WP_011097134.1">
    <property type="nucleotide sequence ID" value="NC_004552.2"/>
</dbReference>
<dbReference type="SMR" id="Q5L5W3"/>
<dbReference type="KEGG" id="cab:CAB518"/>
<dbReference type="eggNOG" id="COG0102">
    <property type="taxonomic scope" value="Bacteria"/>
</dbReference>
<dbReference type="HOGENOM" id="CLU_082184_2_2_0"/>
<dbReference type="OrthoDB" id="9801330at2"/>
<dbReference type="Proteomes" id="UP000001012">
    <property type="component" value="Chromosome"/>
</dbReference>
<dbReference type="GO" id="GO:0022625">
    <property type="term" value="C:cytosolic large ribosomal subunit"/>
    <property type="evidence" value="ECO:0007669"/>
    <property type="project" value="TreeGrafter"/>
</dbReference>
<dbReference type="GO" id="GO:0003729">
    <property type="term" value="F:mRNA binding"/>
    <property type="evidence" value="ECO:0007669"/>
    <property type="project" value="TreeGrafter"/>
</dbReference>
<dbReference type="GO" id="GO:0003735">
    <property type="term" value="F:structural constituent of ribosome"/>
    <property type="evidence" value="ECO:0007669"/>
    <property type="project" value="InterPro"/>
</dbReference>
<dbReference type="GO" id="GO:0017148">
    <property type="term" value="P:negative regulation of translation"/>
    <property type="evidence" value="ECO:0007669"/>
    <property type="project" value="TreeGrafter"/>
</dbReference>
<dbReference type="GO" id="GO:0006412">
    <property type="term" value="P:translation"/>
    <property type="evidence" value="ECO:0007669"/>
    <property type="project" value="UniProtKB-UniRule"/>
</dbReference>
<dbReference type="CDD" id="cd00392">
    <property type="entry name" value="Ribosomal_L13"/>
    <property type="match status" value="1"/>
</dbReference>
<dbReference type="Gene3D" id="3.90.1180.10">
    <property type="entry name" value="Ribosomal protein L13"/>
    <property type="match status" value="1"/>
</dbReference>
<dbReference type="HAMAP" id="MF_01366">
    <property type="entry name" value="Ribosomal_uL13"/>
    <property type="match status" value="1"/>
</dbReference>
<dbReference type="InterPro" id="IPR005822">
    <property type="entry name" value="Ribosomal_uL13"/>
</dbReference>
<dbReference type="InterPro" id="IPR005823">
    <property type="entry name" value="Ribosomal_uL13_bac-type"/>
</dbReference>
<dbReference type="InterPro" id="IPR036899">
    <property type="entry name" value="Ribosomal_uL13_sf"/>
</dbReference>
<dbReference type="NCBIfam" id="TIGR01066">
    <property type="entry name" value="rplM_bact"/>
    <property type="match status" value="1"/>
</dbReference>
<dbReference type="PANTHER" id="PTHR11545:SF2">
    <property type="entry name" value="LARGE RIBOSOMAL SUBUNIT PROTEIN UL13M"/>
    <property type="match status" value="1"/>
</dbReference>
<dbReference type="PANTHER" id="PTHR11545">
    <property type="entry name" value="RIBOSOMAL PROTEIN L13"/>
    <property type="match status" value="1"/>
</dbReference>
<dbReference type="Pfam" id="PF00572">
    <property type="entry name" value="Ribosomal_L13"/>
    <property type="match status" value="1"/>
</dbReference>
<dbReference type="PIRSF" id="PIRSF002181">
    <property type="entry name" value="Ribosomal_L13"/>
    <property type="match status" value="1"/>
</dbReference>
<dbReference type="SUPFAM" id="SSF52161">
    <property type="entry name" value="Ribosomal protein L13"/>
    <property type="match status" value="1"/>
</dbReference>
<keyword id="KW-0687">Ribonucleoprotein</keyword>
<keyword id="KW-0689">Ribosomal protein</keyword>
<organism>
    <name type="scientific">Chlamydia abortus (strain DSM 27085 / S26/3)</name>
    <name type="common">Chlamydophila abortus</name>
    <dbReference type="NCBI Taxonomy" id="218497"/>
    <lineage>
        <taxon>Bacteria</taxon>
        <taxon>Pseudomonadati</taxon>
        <taxon>Chlamydiota</taxon>
        <taxon>Chlamydiia</taxon>
        <taxon>Chlamydiales</taxon>
        <taxon>Chlamydiaceae</taxon>
        <taxon>Chlamydia/Chlamydophila group</taxon>
        <taxon>Chlamydia</taxon>
    </lineage>
</organism>
<feature type="chain" id="PRO_1000055362" description="Large ribosomal subunit protein uL13">
    <location>
        <begin position="1"/>
        <end position="150"/>
    </location>
</feature>
<protein>
    <recommendedName>
        <fullName evidence="1">Large ribosomal subunit protein uL13</fullName>
    </recommendedName>
    <alternativeName>
        <fullName evidence="2">50S ribosomal protein L13</fullName>
    </alternativeName>
</protein>
<name>RL13_CHLAB</name>
<reference key="1">
    <citation type="journal article" date="2005" name="Genome Res.">
        <title>The Chlamydophila abortus genome sequence reveals an array of variable proteins that contribute to interspecies variation.</title>
        <authorList>
            <person name="Thomson N.R."/>
            <person name="Yeats C."/>
            <person name="Bell K."/>
            <person name="Holden M.T.G."/>
            <person name="Bentley S.D."/>
            <person name="Livingstone M."/>
            <person name="Cerdeno-Tarraga A.-M."/>
            <person name="Harris B."/>
            <person name="Doggett J."/>
            <person name="Ormond D."/>
            <person name="Mungall K."/>
            <person name="Clarke K."/>
            <person name="Feltwell T."/>
            <person name="Hance Z."/>
            <person name="Sanders M."/>
            <person name="Quail M.A."/>
            <person name="Price C."/>
            <person name="Barrell B.G."/>
            <person name="Parkhill J."/>
            <person name="Longbottom D."/>
        </authorList>
    </citation>
    <scope>NUCLEOTIDE SEQUENCE [LARGE SCALE GENOMIC DNA]</scope>
    <source>
        <strain>DSM 27085 / S26/3</strain>
    </source>
</reference>
<sequence length="150" mass="16963">MEKRKDTKTTIAKASEAQNKSWYVIDAAGKTLGRLSSEVAKILRGKHKVTYTPHVAMGDGVIVINAEKVHLTGAKKGQKIYRYYTGYISGMREVAFENMIAKKPSYIIEHAIKGMMPKTRLGKRQVKSLRILKGDYYQEFKSQKPIVLDV</sequence>